<evidence type="ECO:0000250" key="1">
    <source>
        <dbReference type="UniProtKB" id="P49588"/>
    </source>
</evidence>
<evidence type="ECO:0000255" key="2">
    <source>
        <dbReference type="HAMAP-Rule" id="MF_03133"/>
    </source>
</evidence>
<evidence type="ECO:0000305" key="3"/>
<accession>O01541</accession>
<accession>Q17371</accession>
<feature type="chain" id="PRO_0000402113" description="Alanine--tRNA ligase, cytoplasmic">
    <location>
        <begin position="1"/>
        <end position="968"/>
    </location>
</feature>
<feature type="binding site" evidence="1">
    <location>
        <position position="77"/>
    </location>
    <ligand>
        <name>ATP</name>
        <dbReference type="ChEBI" id="CHEBI:30616"/>
    </ligand>
</feature>
<feature type="binding site" evidence="1">
    <location>
        <position position="95"/>
    </location>
    <ligand>
        <name>ATP</name>
        <dbReference type="ChEBI" id="CHEBI:30616"/>
    </ligand>
</feature>
<feature type="binding site" evidence="1">
    <location>
        <position position="176"/>
    </location>
    <ligand>
        <name>ATP</name>
        <dbReference type="ChEBI" id="CHEBI:30616"/>
    </ligand>
</feature>
<feature type="binding site" evidence="1">
    <location>
        <begin position="214"/>
        <end position="216"/>
    </location>
    <ligand>
        <name>ATP</name>
        <dbReference type="ChEBI" id="CHEBI:30616"/>
    </ligand>
</feature>
<feature type="binding site" evidence="1">
    <location>
        <position position="216"/>
    </location>
    <ligand>
        <name>L-alanine</name>
        <dbReference type="ChEBI" id="CHEBI:57972"/>
    </ligand>
</feature>
<feature type="binding site" evidence="1">
    <location>
        <position position="239"/>
    </location>
    <ligand>
        <name>L-alanine</name>
        <dbReference type="ChEBI" id="CHEBI:57972"/>
    </ligand>
</feature>
<feature type="binding site" evidence="1">
    <location>
        <position position="243"/>
    </location>
    <ligand>
        <name>ATP</name>
        <dbReference type="ChEBI" id="CHEBI:30616"/>
    </ligand>
</feature>
<feature type="binding site" evidence="2">
    <location>
        <position position="606"/>
    </location>
    <ligand>
        <name>Zn(2+)</name>
        <dbReference type="ChEBI" id="CHEBI:29105"/>
    </ligand>
</feature>
<feature type="binding site" evidence="2">
    <location>
        <position position="610"/>
    </location>
    <ligand>
        <name>Zn(2+)</name>
        <dbReference type="ChEBI" id="CHEBI:29105"/>
    </ligand>
</feature>
<feature type="binding site" evidence="2">
    <location>
        <position position="724"/>
    </location>
    <ligand>
        <name>Zn(2+)</name>
        <dbReference type="ChEBI" id="CHEBI:29105"/>
    </ligand>
</feature>
<feature type="binding site" evidence="2">
    <location>
        <position position="728"/>
    </location>
    <ligand>
        <name>Zn(2+)</name>
        <dbReference type="ChEBI" id="CHEBI:29105"/>
    </ligand>
</feature>
<feature type="sequence conflict" description="In Ref. 1; AAA84420." evidence="3" ref="1">
    <original>K</original>
    <variation>Q</variation>
    <location>
        <position position="272"/>
    </location>
</feature>
<organism>
    <name type="scientific">Caenorhabditis elegans</name>
    <dbReference type="NCBI Taxonomy" id="6239"/>
    <lineage>
        <taxon>Eukaryota</taxon>
        <taxon>Metazoa</taxon>
        <taxon>Ecdysozoa</taxon>
        <taxon>Nematoda</taxon>
        <taxon>Chromadorea</taxon>
        <taxon>Rhabditida</taxon>
        <taxon>Rhabditina</taxon>
        <taxon>Rhabditomorpha</taxon>
        <taxon>Rhabditoidea</taxon>
        <taxon>Rhabditidae</taxon>
        <taxon>Peloderinae</taxon>
        <taxon>Caenorhabditis</taxon>
    </lineage>
</organism>
<dbReference type="EC" id="6.1.1.7" evidence="2"/>
<dbReference type="EMBL" id="FO081252">
    <property type="protein sequence ID" value="CCD70212.1"/>
    <property type="molecule type" value="Genomic_DNA"/>
</dbReference>
<dbReference type="EMBL" id="U41660">
    <property type="protein sequence ID" value="AAA84420.1"/>
    <property type="molecule type" value="mRNA"/>
</dbReference>
<dbReference type="PIR" id="T29466">
    <property type="entry name" value="T29466"/>
</dbReference>
<dbReference type="RefSeq" id="NP_491281.1">
    <property type="nucleotide sequence ID" value="NM_058880.7"/>
</dbReference>
<dbReference type="SMR" id="O01541"/>
<dbReference type="BioGRID" id="37458">
    <property type="interactions" value="16"/>
</dbReference>
<dbReference type="FunCoup" id="O01541">
    <property type="interactions" value="2807"/>
</dbReference>
<dbReference type="IntAct" id="O01541">
    <property type="interactions" value="1"/>
</dbReference>
<dbReference type="STRING" id="6239.F28H1.3.4"/>
<dbReference type="PaxDb" id="6239-F28H1.3.3"/>
<dbReference type="PeptideAtlas" id="O01541"/>
<dbReference type="EnsemblMetazoa" id="F28H1.3.1">
    <property type="protein sequence ID" value="F28H1.3.1"/>
    <property type="gene ID" value="WBGene00000197"/>
</dbReference>
<dbReference type="EnsemblMetazoa" id="F28H1.3.2">
    <property type="protein sequence ID" value="F28H1.3.2"/>
    <property type="gene ID" value="WBGene00000197"/>
</dbReference>
<dbReference type="GeneID" id="171985"/>
<dbReference type="KEGG" id="cel:CELE_F28H1.3"/>
<dbReference type="UCSC" id="F28H1.3.1">
    <property type="organism name" value="c. elegans"/>
</dbReference>
<dbReference type="AGR" id="WB:WBGene00000197"/>
<dbReference type="CTD" id="171985"/>
<dbReference type="WormBase" id="F28H1.3">
    <property type="protein sequence ID" value="CE09768"/>
    <property type="gene ID" value="WBGene00000197"/>
    <property type="gene designation" value="aars-2"/>
</dbReference>
<dbReference type="eggNOG" id="KOG0188">
    <property type="taxonomic scope" value="Eukaryota"/>
</dbReference>
<dbReference type="GeneTree" id="ENSGT00940000157335"/>
<dbReference type="HOGENOM" id="CLU_004485_5_0_1"/>
<dbReference type="InParanoid" id="O01541"/>
<dbReference type="OMA" id="NKKDNFW"/>
<dbReference type="OrthoDB" id="2423964at2759"/>
<dbReference type="PhylomeDB" id="O01541"/>
<dbReference type="PRO" id="PR:O01541"/>
<dbReference type="Proteomes" id="UP000001940">
    <property type="component" value="Chromosome I"/>
</dbReference>
<dbReference type="Bgee" id="WBGene00000197">
    <property type="expression patterns" value="Expressed in adult organism and 4 other cell types or tissues"/>
</dbReference>
<dbReference type="GO" id="GO:0005739">
    <property type="term" value="C:mitochondrion"/>
    <property type="evidence" value="ECO:0000318"/>
    <property type="project" value="GO_Central"/>
</dbReference>
<dbReference type="GO" id="GO:0004813">
    <property type="term" value="F:alanine-tRNA ligase activity"/>
    <property type="evidence" value="ECO:0000318"/>
    <property type="project" value="GO_Central"/>
</dbReference>
<dbReference type="GO" id="GO:0002161">
    <property type="term" value="F:aminoacyl-tRNA deacylase activity"/>
    <property type="evidence" value="ECO:0000318"/>
    <property type="project" value="GO_Central"/>
</dbReference>
<dbReference type="GO" id="GO:0005524">
    <property type="term" value="F:ATP binding"/>
    <property type="evidence" value="ECO:0007669"/>
    <property type="project" value="UniProtKB-UniRule"/>
</dbReference>
<dbReference type="GO" id="GO:0000049">
    <property type="term" value="F:tRNA binding"/>
    <property type="evidence" value="ECO:0007669"/>
    <property type="project" value="UniProtKB-KW"/>
</dbReference>
<dbReference type="GO" id="GO:0008270">
    <property type="term" value="F:zinc ion binding"/>
    <property type="evidence" value="ECO:0007669"/>
    <property type="project" value="UniProtKB-UniRule"/>
</dbReference>
<dbReference type="GO" id="GO:0006419">
    <property type="term" value="P:alanyl-tRNA aminoacylation"/>
    <property type="evidence" value="ECO:0000318"/>
    <property type="project" value="GO_Central"/>
</dbReference>
<dbReference type="CDD" id="cd00673">
    <property type="entry name" value="AlaRS_core"/>
    <property type="match status" value="1"/>
</dbReference>
<dbReference type="FunFam" id="3.10.310.40:FF:000006">
    <property type="entry name" value="Alanine--tRNA ligase, cytoplasmic"/>
    <property type="match status" value="1"/>
</dbReference>
<dbReference type="FunFam" id="3.30.930.10:FF:000011">
    <property type="entry name" value="Alanine--tRNA ligase, cytoplasmic"/>
    <property type="match status" value="1"/>
</dbReference>
<dbReference type="FunFam" id="3.30.980.10:FF:000004">
    <property type="entry name" value="Alanine--tRNA ligase, cytoplasmic"/>
    <property type="match status" value="1"/>
</dbReference>
<dbReference type="Gene3D" id="2.40.30.130">
    <property type="match status" value="1"/>
</dbReference>
<dbReference type="Gene3D" id="3.10.310.40">
    <property type="match status" value="1"/>
</dbReference>
<dbReference type="Gene3D" id="3.30.930.10">
    <property type="entry name" value="Bira Bifunctional Protein, Domain 2"/>
    <property type="match status" value="1"/>
</dbReference>
<dbReference type="Gene3D" id="3.30.980.10">
    <property type="entry name" value="Threonyl-trna Synthetase, Chain A, domain 2"/>
    <property type="match status" value="1"/>
</dbReference>
<dbReference type="HAMAP" id="MF_00036_B">
    <property type="entry name" value="Ala_tRNA_synth_B"/>
    <property type="match status" value="1"/>
</dbReference>
<dbReference type="InterPro" id="IPR045864">
    <property type="entry name" value="aa-tRNA-synth_II/BPL/LPL"/>
</dbReference>
<dbReference type="InterPro" id="IPR002318">
    <property type="entry name" value="Ala-tRNA-lgiase_IIc"/>
</dbReference>
<dbReference type="InterPro" id="IPR018162">
    <property type="entry name" value="Ala-tRNA-ligase_IIc_anticod-bd"/>
</dbReference>
<dbReference type="InterPro" id="IPR018165">
    <property type="entry name" value="Ala-tRNA-synth_IIc_core"/>
</dbReference>
<dbReference type="InterPro" id="IPR018164">
    <property type="entry name" value="Ala-tRNA-synth_IIc_N"/>
</dbReference>
<dbReference type="InterPro" id="IPR050058">
    <property type="entry name" value="Ala-tRNA_ligase"/>
</dbReference>
<dbReference type="InterPro" id="IPR023033">
    <property type="entry name" value="Ala_tRNA_ligase_euk/bac"/>
</dbReference>
<dbReference type="InterPro" id="IPR003156">
    <property type="entry name" value="DHHA1_dom"/>
</dbReference>
<dbReference type="InterPro" id="IPR018163">
    <property type="entry name" value="Thr/Ala-tRNA-synth_IIc_edit"/>
</dbReference>
<dbReference type="InterPro" id="IPR009000">
    <property type="entry name" value="Transl_B-barrel_sf"/>
</dbReference>
<dbReference type="InterPro" id="IPR012947">
    <property type="entry name" value="tRNA_SAD"/>
</dbReference>
<dbReference type="NCBIfam" id="TIGR00344">
    <property type="entry name" value="alaS"/>
    <property type="match status" value="1"/>
</dbReference>
<dbReference type="PANTHER" id="PTHR11777:SF9">
    <property type="entry name" value="ALANINE--TRNA LIGASE, CYTOPLASMIC"/>
    <property type="match status" value="1"/>
</dbReference>
<dbReference type="PANTHER" id="PTHR11777">
    <property type="entry name" value="ALANYL-TRNA SYNTHETASE"/>
    <property type="match status" value="1"/>
</dbReference>
<dbReference type="Pfam" id="PF02272">
    <property type="entry name" value="DHHA1"/>
    <property type="match status" value="1"/>
</dbReference>
<dbReference type="Pfam" id="PF01411">
    <property type="entry name" value="tRNA-synt_2c"/>
    <property type="match status" value="1"/>
</dbReference>
<dbReference type="Pfam" id="PF07973">
    <property type="entry name" value="tRNA_SAD"/>
    <property type="match status" value="1"/>
</dbReference>
<dbReference type="PRINTS" id="PR00980">
    <property type="entry name" value="TRNASYNTHALA"/>
</dbReference>
<dbReference type="SMART" id="SM00863">
    <property type="entry name" value="tRNA_SAD"/>
    <property type="match status" value="1"/>
</dbReference>
<dbReference type="SUPFAM" id="SSF55681">
    <property type="entry name" value="Class II aaRS and biotin synthetases"/>
    <property type="match status" value="1"/>
</dbReference>
<dbReference type="SUPFAM" id="SSF101353">
    <property type="entry name" value="Putative anticodon-binding domain of alanyl-tRNA synthetase (AlaRS)"/>
    <property type="match status" value="1"/>
</dbReference>
<dbReference type="SUPFAM" id="SSF55186">
    <property type="entry name" value="ThrRS/AlaRS common domain"/>
    <property type="match status" value="1"/>
</dbReference>
<dbReference type="SUPFAM" id="SSF50447">
    <property type="entry name" value="Translation proteins"/>
    <property type="match status" value="1"/>
</dbReference>
<dbReference type="PROSITE" id="PS50860">
    <property type="entry name" value="AA_TRNA_LIGASE_II_ALA"/>
    <property type="match status" value="1"/>
</dbReference>
<sequence>MKHLTASEVRSTFINFFREKKEHTYVHSSSVIPHDDPTLLFANAGMNQFKPLFLGIADPNSDLAKLKRAVNTQKCIRAGGKHNDLDDVGKDVYHHTYFEMLGNWSFGDYFKKEIITWAWELLTTVYGIPAERLYVSVFGGDEANGVPADSEARDIWRSVGVPDERILNFGMKDNFWEMGDVGPCGPCSEIHYDRIGNRDASHLVNADDPMVVEIWNLVFIQFNREEGGVLKPLPAKHIDCGLGLERLIAVMQDKTSNYDTDIFQPIFEAIHKGSGVRAYTGFIGDEDKDGVDMAYRVVADHVRTLTIALSDGGRPDNSGRGYVLRRILRRGVRYASEKLNAQPGFFASLVPVVISILGETFPELSRDPVTVMDIINDEEKQFLKTLSRGRVLFQRAVQSLPEGTMTFPGDVSWRLYDTYGFPADLTQLMAEEKGLSVDNTAFEEARRKAIETSSAGTGKFRDTLDLDVHALAELQQKGVPTTDDSPKYAYTFTGEGSDAVYKFEPCVGKILAIRRDGKFVDQLAAGEEGAILLDRTNFYAEQGGQIYDVGVLTKVNDESNEFNVSNCQVRGGYIVLVGSAEGSFSVGDQVNERFDEDRKQLIMKNHTGTHVLNYALRKVLADSDQKGSLVAPDRMRFDFTNKAGMTVQQVKKAEEYAQQLIDTKGQVYAKNSPLGEAKKVKGLRAMFDETYPDPVRVVAVGTPVEQLLQNPDAEEGQNTTVEFCGGTHLQNVSHIGRIVIASEEAIAKGIRRIVALTGPEAERAIARADRLTARLEEESKHADKKDELLANKDKFKALQKKIQEIVDEANGAQLPYWRKDSIREKAKAIQKTLDGYTKAQQAAVAEKVLGEAKELAAVAEQPTVLVHVFAANANSKAIDNALKLLKDTKAVMAFSVNEDSGKVLCLAKVDKSLVSNGLKANEWVNEVCTVLGGKGGGKDANAQLTGENVDKLDAAVELAQKFALAAIN</sequence>
<reference key="1">
    <citation type="journal article" date="1998" name="Science">
        <title>Genome sequence of the nematode C. elegans: a platform for investigating biology.</title>
        <authorList>
            <consortium name="The C. elegans sequencing consortium"/>
        </authorList>
    </citation>
    <scope>NUCLEOTIDE SEQUENCE [LARGE SCALE GENOMIC DNA]</scope>
    <source>
        <strain>Bristol N2</strain>
    </source>
</reference>
<reference key="2">
    <citation type="journal article" date="1998" name="Biochemistry">
        <title>Strong selective pressure to use G:U to mark an RNA acceptor stem for alanine.</title>
        <authorList>
            <person name="Chihade J.W."/>
            <person name="Hayashibara K."/>
            <person name="Shiba K."/>
            <person name="Schimmel P."/>
        </authorList>
    </citation>
    <scope>NUCLEOTIDE SEQUENCE [MRNA] OF 1-272</scope>
    <source>
        <strain>Bristol N2</strain>
    </source>
</reference>
<name>SYAC_CAEEL</name>
<proteinExistence type="evidence at transcript level"/>
<gene>
    <name evidence="2" type="primary">aars-2</name>
    <name type="synonym">ars-2</name>
    <name type="ORF">F28H1.3</name>
</gene>
<protein>
    <recommendedName>
        <fullName evidence="2">Alanine--tRNA ligase, cytoplasmic</fullName>
        <ecNumber evidence="2">6.1.1.7</ecNumber>
    </recommendedName>
    <alternativeName>
        <fullName>AlaRS A</fullName>
    </alternativeName>
    <alternativeName>
        <fullName evidence="2">Alanyl-tRNA synthetase</fullName>
    </alternativeName>
</protein>
<keyword id="KW-0030">Aminoacyl-tRNA synthetase</keyword>
<keyword id="KW-0067">ATP-binding</keyword>
<keyword id="KW-0963">Cytoplasm</keyword>
<keyword id="KW-0436">Ligase</keyword>
<keyword id="KW-0479">Metal-binding</keyword>
<keyword id="KW-0547">Nucleotide-binding</keyword>
<keyword id="KW-0648">Protein biosynthesis</keyword>
<keyword id="KW-1185">Reference proteome</keyword>
<keyword id="KW-0694">RNA-binding</keyword>
<keyword id="KW-0820">tRNA-binding</keyword>
<keyword id="KW-0862">Zinc</keyword>
<comment type="function">
    <text evidence="2">Catalyzes the attachment of alanine to tRNA(Ala) in a two-step reaction: alanine is first activated by ATP to form Ala-AMP and then transferred to the acceptor end of tRNA(Ala). Also edits incorrectly charged tRNA(Ala) via its editing domain.</text>
</comment>
<comment type="catalytic activity">
    <reaction evidence="2">
        <text>tRNA(Ala) + L-alanine + ATP = L-alanyl-tRNA(Ala) + AMP + diphosphate</text>
        <dbReference type="Rhea" id="RHEA:12540"/>
        <dbReference type="Rhea" id="RHEA-COMP:9657"/>
        <dbReference type="Rhea" id="RHEA-COMP:9923"/>
        <dbReference type="ChEBI" id="CHEBI:30616"/>
        <dbReference type="ChEBI" id="CHEBI:33019"/>
        <dbReference type="ChEBI" id="CHEBI:57972"/>
        <dbReference type="ChEBI" id="CHEBI:78442"/>
        <dbReference type="ChEBI" id="CHEBI:78497"/>
        <dbReference type="ChEBI" id="CHEBI:456215"/>
        <dbReference type="EC" id="6.1.1.7"/>
    </reaction>
</comment>
<comment type="cofactor">
    <cofactor evidence="2">
        <name>Zn(2+)</name>
        <dbReference type="ChEBI" id="CHEBI:29105"/>
    </cofactor>
    <text evidence="2">Binds 1 zinc ion per subunit.</text>
</comment>
<comment type="subunit">
    <text evidence="2">Monomer.</text>
</comment>
<comment type="subcellular location">
    <subcellularLocation>
        <location evidence="2">Cytoplasm</location>
    </subcellularLocation>
</comment>
<comment type="domain">
    <text evidence="2">Consists of three domains; the N-terminal catalytic domain, the editing domain and the C-terminal C-Ala domain. The editing domain removes incorrectly charged amino acids, while the C-Ala domain, along with tRNA(Ala), serves as a bridge to cooperatively bring together the editing and aminoacylation centers thus stimulating deacylation of misacylated tRNAs.</text>
</comment>
<comment type="similarity">
    <text evidence="2">Belongs to the class-II aminoacyl-tRNA synthetase family.</text>
</comment>